<sequence length="636" mass="69432">MSSAEALAFDVIVIGGGHAGCEAASAAARAGARTALVTHRFDTIGVMSCNPAIGGLGKGHLVREIDALDGLMGRVADRAGIQFRLLNRRKGPAVRGPRTQADRKLYRLAMQQMITEQENLTVVEGGAADLVCDGERISGVTLADGRVLKCGAVVLTTGTFLNGLIHIGEKRFPAGRMGEKPALGLSERLLSFGFTLGRLKTGTPPRLDGRTIDWQSLDMQSADEEPVPFSLMTDRITTPQIECGITRTTPETHDIIRANLHRSAMYSGSIEGIGPRYCPSVEDKIVKFGDRDGHQIFLEPEGLDDDTVYPNGISTSLPEDVQLEILKTIPGLEKAVLLQPGYAIEYDFIDPRELKRSLETRKVCGLFLAGQINGTTGYEEAGAQGLLAGLNAARRAAGSEPVILQRTEAYIGVMVDDLTSRGVSEPYRMFTSRAEFRLSLRADNADQRLTPLADEVGILSEERRKRYLTRETALSHARMVTQSLSITPNLAGYYDLRLNQDGVRRSAYDLLSYPDINLDRLIAIWPELASIDPVTREALEIEAQYAVYMERQQSDIAVMEREERLLIPSGLDFDAISGLSNELKQKLKQRKPETIAEAQRVDGMTPAAVALLIAQIRKFGGRQKLAAETLEGKGAA</sequence>
<accession>Q57AJ7</accession>
<organism>
    <name type="scientific">Brucella abortus biovar 1 (strain 9-941)</name>
    <dbReference type="NCBI Taxonomy" id="262698"/>
    <lineage>
        <taxon>Bacteria</taxon>
        <taxon>Pseudomonadati</taxon>
        <taxon>Pseudomonadota</taxon>
        <taxon>Alphaproteobacteria</taxon>
        <taxon>Hyphomicrobiales</taxon>
        <taxon>Brucellaceae</taxon>
        <taxon>Brucella/Ochrobactrum group</taxon>
        <taxon>Brucella</taxon>
    </lineage>
</organism>
<keyword id="KW-0963">Cytoplasm</keyword>
<keyword id="KW-0274">FAD</keyword>
<keyword id="KW-0285">Flavoprotein</keyword>
<keyword id="KW-0520">NAD</keyword>
<keyword id="KW-0819">tRNA processing</keyword>
<evidence type="ECO:0000255" key="1">
    <source>
        <dbReference type="HAMAP-Rule" id="MF_00129"/>
    </source>
</evidence>
<comment type="function">
    <text evidence="1">NAD-binding protein involved in the addition of a carboxymethylaminomethyl (cmnm) group at the wobble position (U34) of certain tRNAs, forming tRNA-cmnm(5)s(2)U34.</text>
</comment>
<comment type="cofactor">
    <cofactor evidence="1">
        <name>FAD</name>
        <dbReference type="ChEBI" id="CHEBI:57692"/>
    </cofactor>
</comment>
<comment type="subunit">
    <text evidence="1">Homodimer. Heterotetramer of two MnmE and two MnmG subunits.</text>
</comment>
<comment type="subcellular location">
    <subcellularLocation>
        <location evidence="1">Cytoplasm</location>
    </subcellularLocation>
</comment>
<comment type="similarity">
    <text evidence="1">Belongs to the MnmG family.</text>
</comment>
<feature type="chain" id="PRO_0000117069" description="tRNA uridine 5-carboxymethylaminomethyl modification enzyme MnmG">
    <location>
        <begin position="1"/>
        <end position="636"/>
    </location>
</feature>
<feature type="binding site" evidence="1">
    <location>
        <begin position="15"/>
        <end position="20"/>
    </location>
    <ligand>
        <name>FAD</name>
        <dbReference type="ChEBI" id="CHEBI:57692"/>
    </ligand>
</feature>
<feature type="binding site" evidence="1">
    <location>
        <begin position="274"/>
        <end position="288"/>
    </location>
    <ligand>
        <name>NAD(+)</name>
        <dbReference type="ChEBI" id="CHEBI:57540"/>
    </ligand>
</feature>
<protein>
    <recommendedName>
        <fullName evidence="1">tRNA uridine 5-carboxymethylaminomethyl modification enzyme MnmG</fullName>
    </recommendedName>
    <alternativeName>
        <fullName evidence="1">Glucose-inhibited division protein A</fullName>
    </alternativeName>
</protein>
<dbReference type="EMBL" id="AE017223">
    <property type="protein sequence ID" value="AAX75337.1"/>
    <property type="molecule type" value="Genomic_DNA"/>
</dbReference>
<dbReference type="RefSeq" id="WP_002967028.1">
    <property type="nucleotide sequence ID" value="NC_006932.1"/>
</dbReference>
<dbReference type="SMR" id="Q57AJ7"/>
<dbReference type="EnsemblBacteria" id="AAX75337">
    <property type="protein sequence ID" value="AAX75337"/>
    <property type="gene ID" value="BruAb1_2036"/>
</dbReference>
<dbReference type="GeneID" id="93017628"/>
<dbReference type="KEGG" id="bmb:BruAb1_2036"/>
<dbReference type="HOGENOM" id="CLU_007831_2_2_5"/>
<dbReference type="Proteomes" id="UP000000540">
    <property type="component" value="Chromosome I"/>
</dbReference>
<dbReference type="GO" id="GO:0005829">
    <property type="term" value="C:cytosol"/>
    <property type="evidence" value="ECO:0007669"/>
    <property type="project" value="TreeGrafter"/>
</dbReference>
<dbReference type="GO" id="GO:0050660">
    <property type="term" value="F:flavin adenine dinucleotide binding"/>
    <property type="evidence" value="ECO:0007669"/>
    <property type="project" value="UniProtKB-UniRule"/>
</dbReference>
<dbReference type="GO" id="GO:0030488">
    <property type="term" value="P:tRNA methylation"/>
    <property type="evidence" value="ECO:0007669"/>
    <property type="project" value="TreeGrafter"/>
</dbReference>
<dbReference type="GO" id="GO:0002098">
    <property type="term" value="P:tRNA wobble uridine modification"/>
    <property type="evidence" value="ECO:0007669"/>
    <property type="project" value="InterPro"/>
</dbReference>
<dbReference type="FunFam" id="3.50.50.60:FF:000145">
    <property type="entry name" value="tRNA uridine 5-carboxymethylaminomethyl modification enzyme"/>
    <property type="match status" value="1"/>
</dbReference>
<dbReference type="FunFam" id="1.10.150.570:FF:000001">
    <property type="entry name" value="tRNA uridine 5-carboxymethylaminomethyl modification enzyme MnmG"/>
    <property type="match status" value="1"/>
</dbReference>
<dbReference type="FunFam" id="3.50.50.60:FF:000002">
    <property type="entry name" value="tRNA uridine 5-carboxymethylaminomethyl modification enzyme MnmG"/>
    <property type="match status" value="1"/>
</dbReference>
<dbReference type="Gene3D" id="3.50.50.60">
    <property type="entry name" value="FAD/NAD(P)-binding domain"/>
    <property type="match status" value="2"/>
</dbReference>
<dbReference type="Gene3D" id="1.10.150.570">
    <property type="entry name" value="GidA associated domain, C-terminal subdomain"/>
    <property type="match status" value="1"/>
</dbReference>
<dbReference type="Gene3D" id="1.10.10.1800">
    <property type="entry name" value="tRNA uridine 5-carboxymethylaminomethyl modification enzyme MnmG/GidA"/>
    <property type="match status" value="1"/>
</dbReference>
<dbReference type="HAMAP" id="MF_00129">
    <property type="entry name" value="MnmG_GidA"/>
    <property type="match status" value="1"/>
</dbReference>
<dbReference type="InterPro" id="IPR036188">
    <property type="entry name" value="FAD/NAD-bd_sf"/>
</dbReference>
<dbReference type="InterPro" id="IPR049312">
    <property type="entry name" value="GIDA_C_N"/>
</dbReference>
<dbReference type="InterPro" id="IPR004416">
    <property type="entry name" value="MnmG"/>
</dbReference>
<dbReference type="InterPro" id="IPR002218">
    <property type="entry name" value="MnmG-rel"/>
</dbReference>
<dbReference type="InterPro" id="IPR020595">
    <property type="entry name" value="MnmG-rel_CS"/>
</dbReference>
<dbReference type="InterPro" id="IPR026904">
    <property type="entry name" value="MnmG_C"/>
</dbReference>
<dbReference type="InterPro" id="IPR047001">
    <property type="entry name" value="MnmG_C_subdom"/>
</dbReference>
<dbReference type="InterPro" id="IPR044920">
    <property type="entry name" value="MnmG_C_subdom_sf"/>
</dbReference>
<dbReference type="InterPro" id="IPR040131">
    <property type="entry name" value="MnmG_N"/>
</dbReference>
<dbReference type="NCBIfam" id="TIGR00136">
    <property type="entry name" value="mnmG_gidA"/>
    <property type="match status" value="1"/>
</dbReference>
<dbReference type="PANTHER" id="PTHR11806">
    <property type="entry name" value="GLUCOSE INHIBITED DIVISION PROTEIN A"/>
    <property type="match status" value="1"/>
</dbReference>
<dbReference type="PANTHER" id="PTHR11806:SF0">
    <property type="entry name" value="PROTEIN MTO1 HOMOLOG, MITOCHONDRIAL"/>
    <property type="match status" value="1"/>
</dbReference>
<dbReference type="Pfam" id="PF01134">
    <property type="entry name" value="GIDA"/>
    <property type="match status" value="1"/>
</dbReference>
<dbReference type="Pfam" id="PF21680">
    <property type="entry name" value="GIDA_C_1st"/>
    <property type="match status" value="1"/>
</dbReference>
<dbReference type="Pfam" id="PF13932">
    <property type="entry name" value="SAM_GIDA_C"/>
    <property type="match status" value="1"/>
</dbReference>
<dbReference type="SMART" id="SM01228">
    <property type="entry name" value="GIDA_assoc_3"/>
    <property type="match status" value="1"/>
</dbReference>
<dbReference type="SUPFAM" id="SSF51905">
    <property type="entry name" value="FAD/NAD(P)-binding domain"/>
    <property type="match status" value="1"/>
</dbReference>
<dbReference type="PROSITE" id="PS01280">
    <property type="entry name" value="GIDA_1"/>
    <property type="match status" value="1"/>
</dbReference>
<dbReference type="PROSITE" id="PS01281">
    <property type="entry name" value="GIDA_2"/>
    <property type="match status" value="1"/>
</dbReference>
<name>MNMG_BRUAB</name>
<proteinExistence type="inferred from homology"/>
<gene>
    <name evidence="1" type="primary">mnmG</name>
    <name evidence="1" type="synonym">gidA</name>
    <name type="ordered locus">BruAb1_2036</name>
</gene>
<reference key="1">
    <citation type="journal article" date="2005" name="J. Bacteriol.">
        <title>Completion of the genome sequence of Brucella abortus and comparison to the highly similar genomes of Brucella melitensis and Brucella suis.</title>
        <authorList>
            <person name="Halling S.M."/>
            <person name="Peterson-Burch B.D."/>
            <person name="Bricker B.J."/>
            <person name="Zuerner R.L."/>
            <person name="Qing Z."/>
            <person name="Li L.-L."/>
            <person name="Kapur V."/>
            <person name="Alt D.P."/>
            <person name="Olsen S.C."/>
        </authorList>
    </citation>
    <scope>NUCLEOTIDE SEQUENCE [LARGE SCALE GENOMIC DNA]</scope>
    <source>
        <strain>9-941</strain>
    </source>
</reference>